<sequence length="248" mass="27600">MSFVVIIPARYASTRLPGKPLVDINGKPMIVHVLERARESGADRIIVATDHEDVARAVEAAGGEVCMTRADHQSGTERLAEVVEKCAFSDDTVIVNVQGDEPMIPATIIRQVADNLAQRQVGMATLAVPIHNAEEAFNPNAVKVVLDAEGYALYFSRATIPWDRDRFAEGLETVGDNFLRHLGIYGYRAGFIRRYVNWQPSPLEHIEMLEQLRVLWYGEKIHVAVAQEVPGTGVDTPEDLERVRAEMR</sequence>
<dbReference type="EC" id="2.7.7.38" evidence="1"/>
<dbReference type="EMBL" id="CU928145">
    <property type="protein sequence ID" value="CAU96827.1"/>
    <property type="molecule type" value="Genomic_DNA"/>
</dbReference>
<dbReference type="RefSeq" id="WP_000011590.1">
    <property type="nucleotide sequence ID" value="NC_011748.1"/>
</dbReference>
<dbReference type="SMR" id="B7LE16"/>
<dbReference type="KEGG" id="eck:EC55989_0963"/>
<dbReference type="HOGENOM" id="CLU_065038_1_0_6"/>
<dbReference type="UniPathway" id="UPA00030"/>
<dbReference type="UniPathway" id="UPA00358">
    <property type="reaction ID" value="UER00476"/>
</dbReference>
<dbReference type="Proteomes" id="UP000000746">
    <property type="component" value="Chromosome"/>
</dbReference>
<dbReference type="GO" id="GO:0005829">
    <property type="term" value="C:cytosol"/>
    <property type="evidence" value="ECO:0007669"/>
    <property type="project" value="TreeGrafter"/>
</dbReference>
<dbReference type="GO" id="GO:0008690">
    <property type="term" value="F:3-deoxy-manno-octulosonate cytidylyltransferase activity"/>
    <property type="evidence" value="ECO:0007669"/>
    <property type="project" value="UniProtKB-UniRule"/>
</dbReference>
<dbReference type="GO" id="GO:0033468">
    <property type="term" value="P:CMP-keto-3-deoxy-D-manno-octulosonic acid biosynthetic process"/>
    <property type="evidence" value="ECO:0007669"/>
    <property type="project" value="UniProtKB-UniRule"/>
</dbReference>
<dbReference type="GO" id="GO:0009103">
    <property type="term" value="P:lipopolysaccharide biosynthetic process"/>
    <property type="evidence" value="ECO:0007669"/>
    <property type="project" value="UniProtKB-UniRule"/>
</dbReference>
<dbReference type="CDD" id="cd02517">
    <property type="entry name" value="CMP-KDO-Synthetase"/>
    <property type="match status" value="1"/>
</dbReference>
<dbReference type="FunFam" id="3.90.550.10:FF:000011">
    <property type="entry name" value="3-deoxy-manno-octulosonate cytidylyltransferase"/>
    <property type="match status" value="1"/>
</dbReference>
<dbReference type="Gene3D" id="3.90.550.10">
    <property type="entry name" value="Spore Coat Polysaccharide Biosynthesis Protein SpsA, Chain A"/>
    <property type="match status" value="1"/>
</dbReference>
<dbReference type="HAMAP" id="MF_00057">
    <property type="entry name" value="KdsB"/>
    <property type="match status" value="1"/>
</dbReference>
<dbReference type="InterPro" id="IPR003329">
    <property type="entry name" value="Cytidylyl_trans"/>
</dbReference>
<dbReference type="InterPro" id="IPR004528">
    <property type="entry name" value="KdsB"/>
</dbReference>
<dbReference type="InterPro" id="IPR029044">
    <property type="entry name" value="Nucleotide-diphossugar_trans"/>
</dbReference>
<dbReference type="NCBIfam" id="TIGR00466">
    <property type="entry name" value="kdsB"/>
    <property type="match status" value="1"/>
</dbReference>
<dbReference type="NCBIfam" id="NF003950">
    <property type="entry name" value="PRK05450.1-3"/>
    <property type="match status" value="1"/>
</dbReference>
<dbReference type="NCBIfam" id="NF003952">
    <property type="entry name" value="PRK05450.1-5"/>
    <property type="match status" value="1"/>
</dbReference>
<dbReference type="NCBIfam" id="NF009905">
    <property type="entry name" value="PRK13368.1"/>
    <property type="match status" value="1"/>
</dbReference>
<dbReference type="PANTHER" id="PTHR42866">
    <property type="entry name" value="3-DEOXY-MANNO-OCTULOSONATE CYTIDYLYLTRANSFERASE"/>
    <property type="match status" value="1"/>
</dbReference>
<dbReference type="PANTHER" id="PTHR42866:SF2">
    <property type="entry name" value="3-DEOXY-MANNO-OCTULOSONATE CYTIDYLYLTRANSFERASE, MITOCHONDRIAL"/>
    <property type="match status" value="1"/>
</dbReference>
<dbReference type="Pfam" id="PF02348">
    <property type="entry name" value="CTP_transf_3"/>
    <property type="match status" value="1"/>
</dbReference>
<dbReference type="SUPFAM" id="SSF53448">
    <property type="entry name" value="Nucleotide-diphospho-sugar transferases"/>
    <property type="match status" value="1"/>
</dbReference>
<organism>
    <name type="scientific">Escherichia coli (strain 55989 / EAEC)</name>
    <dbReference type="NCBI Taxonomy" id="585055"/>
    <lineage>
        <taxon>Bacteria</taxon>
        <taxon>Pseudomonadati</taxon>
        <taxon>Pseudomonadota</taxon>
        <taxon>Gammaproteobacteria</taxon>
        <taxon>Enterobacterales</taxon>
        <taxon>Enterobacteriaceae</taxon>
        <taxon>Escherichia</taxon>
    </lineage>
</organism>
<evidence type="ECO:0000255" key="1">
    <source>
        <dbReference type="HAMAP-Rule" id="MF_00057"/>
    </source>
</evidence>
<protein>
    <recommendedName>
        <fullName evidence="1">3-deoxy-manno-octulosonate cytidylyltransferase</fullName>
        <ecNumber evidence="1">2.7.7.38</ecNumber>
    </recommendedName>
    <alternativeName>
        <fullName evidence="1">CMP-2-keto-3-deoxyoctulosonic acid synthase</fullName>
        <shortName evidence="1">CKS</shortName>
        <shortName evidence="1">CMP-KDO synthase</shortName>
    </alternativeName>
</protein>
<proteinExistence type="inferred from homology"/>
<name>KDSB_ECO55</name>
<accession>B7LE16</accession>
<reference key="1">
    <citation type="journal article" date="2009" name="PLoS Genet.">
        <title>Organised genome dynamics in the Escherichia coli species results in highly diverse adaptive paths.</title>
        <authorList>
            <person name="Touchon M."/>
            <person name="Hoede C."/>
            <person name="Tenaillon O."/>
            <person name="Barbe V."/>
            <person name="Baeriswyl S."/>
            <person name="Bidet P."/>
            <person name="Bingen E."/>
            <person name="Bonacorsi S."/>
            <person name="Bouchier C."/>
            <person name="Bouvet O."/>
            <person name="Calteau A."/>
            <person name="Chiapello H."/>
            <person name="Clermont O."/>
            <person name="Cruveiller S."/>
            <person name="Danchin A."/>
            <person name="Diard M."/>
            <person name="Dossat C."/>
            <person name="Karoui M.E."/>
            <person name="Frapy E."/>
            <person name="Garry L."/>
            <person name="Ghigo J.M."/>
            <person name="Gilles A.M."/>
            <person name="Johnson J."/>
            <person name="Le Bouguenec C."/>
            <person name="Lescat M."/>
            <person name="Mangenot S."/>
            <person name="Martinez-Jehanne V."/>
            <person name="Matic I."/>
            <person name="Nassif X."/>
            <person name="Oztas S."/>
            <person name="Petit M.A."/>
            <person name="Pichon C."/>
            <person name="Rouy Z."/>
            <person name="Ruf C.S."/>
            <person name="Schneider D."/>
            <person name="Tourret J."/>
            <person name="Vacherie B."/>
            <person name="Vallenet D."/>
            <person name="Medigue C."/>
            <person name="Rocha E.P.C."/>
            <person name="Denamur E."/>
        </authorList>
    </citation>
    <scope>NUCLEOTIDE SEQUENCE [LARGE SCALE GENOMIC DNA]</scope>
    <source>
        <strain>55989 / EAEC</strain>
    </source>
</reference>
<feature type="chain" id="PRO_1000117800" description="3-deoxy-manno-octulosonate cytidylyltransferase">
    <location>
        <begin position="1"/>
        <end position="248"/>
    </location>
</feature>
<comment type="function">
    <text evidence="1">Activates KDO (a required 8-carbon sugar) for incorporation into bacterial lipopolysaccharide in Gram-negative bacteria.</text>
</comment>
<comment type="catalytic activity">
    <reaction evidence="1">
        <text>3-deoxy-alpha-D-manno-oct-2-ulosonate + CTP = CMP-3-deoxy-beta-D-manno-octulosonate + diphosphate</text>
        <dbReference type="Rhea" id="RHEA:23448"/>
        <dbReference type="ChEBI" id="CHEBI:33019"/>
        <dbReference type="ChEBI" id="CHEBI:37563"/>
        <dbReference type="ChEBI" id="CHEBI:85986"/>
        <dbReference type="ChEBI" id="CHEBI:85987"/>
        <dbReference type="EC" id="2.7.7.38"/>
    </reaction>
</comment>
<comment type="pathway">
    <text evidence="1">Nucleotide-sugar biosynthesis; CMP-3-deoxy-D-manno-octulosonate biosynthesis; CMP-3-deoxy-D-manno-octulosonate from 3-deoxy-D-manno-octulosonate and CTP: step 1/1.</text>
</comment>
<comment type="pathway">
    <text evidence="1">Bacterial outer membrane biogenesis; lipopolysaccharide biosynthesis.</text>
</comment>
<comment type="subcellular location">
    <subcellularLocation>
        <location evidence="1">Cytoplasm</location>
    </subcellularLocation>
</comment>
<comment type="similarity">
    <text evidence="1">Belongs to the KdsB family.</text>
</comment>
<gene>
    <name evidence="1" type="primary">kdsB</name>
    <name type="ordered locus">EC55989_0963</name>
</gene>
<keyword id="KW-0963">Cytoplasm</keyword>
<keyword id="KW-0448">Lipopolysaccharide biosynthesis</keyword>
<keyword id="KW-0548">Nucleotidyltransferase</keyword>
<keyword id="KW-1185">Reference proteome</keyword>
<keyword id="KW-0808">Transferase</keyword>